<accession>P0A5P9</accession>
<accession>A0A1R3Y111</accession>
<accession>O05822</accession>
<accession>X2BKH3</accession>
<evidence type="ECO:0000250" key="1"/>
<evidence type="ECO:0000255" key="2"/>
<evidence type="ECO:0000305" key="3"/>
<organism>
    <name type="scientific">Mycobacterium bovis (strain ATCC BAA-935 / AF2122/97)</name>
    <dbReference type="NCBI Taxonomy" id="233413"/>
    <lineage>
        <taxon>Bacteria</taxon>
        <taxon>Bacillati</taxon>
        <taxon>Actinomycetota</taxon>
        <taxon>Actinomycetes</taxon>
        <taxon>Mycobacteriales</taxon>
        <taxon>Mycobacteriaceae</taxon>
        <taxon>Mycobacterium</taxon>
        <taxon>Mycobacterium tuberculosis complex</taxon>
    </lineage>
</organism>
<protein>
    <recommendedName>
        <fullName>Low molecular weight antigen MTB12</fullName>
    </recommendedName>
    <alternativeName>
        <fullName>CFP-2</fullName>
    </alternativeName>
    <alternativeName>
        <fullName>Low molecular weight protein antigen 2</fullName>
    </alternativeName>
</protein>
<keyword id="KW-1185">Reference proteome</keyword>
<keyword id="KW-0964">Secreted</keyword>
<keyword id="KW-0732">Signal</keyword>
<sequence length="168" mass="16635">MKMVKSIAAGLTAAAAIGAAAAGVTSIMAGGPVVYQMQPVVFGAPLPLDPASAPDVPTAAQLTSLLNSLADPNVSFANKGSLVEGGIGGTEARIADHKLKKAAEHGDLPLSFSVTNIQPAAAGSATADVSVSGPKLSSPVTQNVTFVNQGGWMLSRASAMELLQAAGN</sequence>
<feature type="signal peptide" evidence="2">
    <location>
        <begin position="1"/>
        <end position="22"/>
    </location>
</feature>
<feature type="propeptide" id="PRO_0000021774" evidence="1">
    <location>
        <begin position="23"/>
        <end position="48"/>
    </location>
</feature>
<feature type="chain" id="PRO_0000021775" description="Low molecular weight antigen MTB12">
    <location>
        <begin position="49"/>
        <end position="168"/>
    </location>
</feature>
<proteinExistence type="inferred from homology"/>
<gene>
    <name type="primary">mtb12</name>
    <name type="synonym">cfp2</name>
    <name type="ordered locus">BQ2027_MB2397C</name>
</gene>
<reference key="1">
    <citation type="journal article" date="2003" name="Proc. Natl. Acad. Sci. U.S.A.">
        <title>The complete genome sequence of Mycobacterium bovis.</title>
        <authorList>
            <person name="Garnier T."/>
            <person name="Eiglmeier K."/>
            <person name="Camus J.-C."/>
            <person name="Medina N."/>
            <person name="Mansoor H."/>
            <person name="Pryor M."/>
            <person name="Duthoy S."/>
            <person name="Grondin S."/>
            <person name="Lacroix C."/>
            <person name="Monsempe C."/>
            <person name="Simon S."/>
            <person name="Harris B."/>
            <person name="Atkin R."/>
            <person name="Doggett J."/>
            <person name="Mayes R."/>
            <person name="Keating L."/>
            <person name="Wheeler P.R."/>
            <person name="Parkhill J."/>
            <person name="Barrell B.G."/>
            <person name="Cole S.T."/>
            <person name="Gordon S.V."/>
            <person name="Hewinson R.G."/>
        </authorList>
    </citation>
    <scope>NUCLEOTIDE SEQUENCE [LARGE SCALE GENOMIC DNA]</scope>
    <source>
        <strain>ATCC BAA-935 / AF2122/97</strain>
    </source>
</reference>
<reference key="2">
    <citation type="journal article" date="2017" name="Genome Announc.">
        <title>Updated reference genome sequence and annotation of Mycobacterium bovis AF2122/97.</title>
        <authorList>
            <person name="Malone K.M."/>
            <person name="Farrell D."/>
            <person name="Stuber T.P."/>
            <person name="Schubert O.T."/>
            <person name="Aebersold R."/>
            <person name="Robbe-Austerman S."/>
            <person name="Gordon S.V."/>
        </authorList>
    </citation>
    <scope>NUCLEOTIDE SEQUENCE [LARGE SCALE GENOMIC DNA]</scope>
    <scope>GENOME REANNOTATION</scope>
    <source>
        <strain>ATCC BAA-935 / AF2122/97</strain>
    </source>
</reference>
<dbReference type="EMBL" id="LT708304">
    <property type="protein sequence ID" value="SIU01009.1"/>
    <property type="molecule type" value="Genomic_DNA"/>
</dbReference>
<dbReference type="RefSeq" id="NP_856046.1">
    <property type="nucleotide sequence ID" value="NC_002945.3"/>
</dbReference>
<dbReference type="RefSeq" id="WP_003412264.1">
    <property type="nucleotide sequence ID" value="NC_002945.4"/>
</dbReference>
<dbReference type="SMR" id="P0A5P9"/>
<dbReference type="KEGG" id="mbo:BQ2027_MB2397C"/>
<dbReference type="PATRIC" id="fig|233413.5.peg.2634"/>
<dbReference type="Proteomes" id="UP000001419">
    <property type="component" value="Chromosome"/>
</dbReference>
<dbReference type="GO" id="GO:0005576">
    <property type="term" value="C:extracellular region"/>
    <property type="evidence" value="ECO:0007669"/>
    <property type="project" value="UniProtKB-SubCell"/>
</dbReference>
<comment type="function">
    <text evidence="1">May play a role in the development of protective immune responses.</text>
</comment>
<comment type="subcellular location">
    <subcellularLocation>
        <location evidence="1">Secreted</location>
    </subcellularLocation>
</comment>
<comment type="similarity">
    <text evidence="3">Belongs to the MTB12 family.</text>
</comment>
<name>MTB12_MYCBO</name>